<comment type="function">
    <text evidence="1">Adapter protein involved in the Toll-like receptor and IL-1 receptor signaling pathway in the innate immune response.</text>
</comment>
<comment type="subcellular location">
    <subcellularLocation>
        <location evidence="1">Cytoplasm</location>
    </subcellularLocation>
</comment>
<comment type="domain">
    <text evidence="1">The intermediate domain (ID) is required for the phosphorylation and activation of IRAK.</text>
</comment>
<accession>Q28DJ2</accession>
<organism>
    <name type="scientific">Xenopus tropicalis</name>
    <name type="common">Western clawed frog</name>
    <name type="synonym">Silurana tropicalis</name>
    <dbReference type="NCBI Taxonomy" id="8364"/>
    <lineage>
        <taxon>Eukaryota</taxon>
        <taxon>Metazoa</taxon>
        <taxon>Chordata</taxon>
        <taxon>Craniata</taxon>
        <taxon>Vertebrata</taxon>
        <taxon>Euteleostomi</taxon>
        <taxon>Amphibia</taxon>
        <taxon>Batrachia</taxon>
        <taxon>Anura</taxon>
        <taxon>Pipoidea</taxon>
        <taxon>Pipidae</taxon>
        <taxon>Xenopodinae</taxon>
        <taxon>Xenopus</taxon>
        <taxon>Silurana</taxon>
    </lineage>
</organism>
<feature type="chain" id="PRO_0000393147" description="Myeloid differentiation primary response protein MyD88">
    <location>
        <begin position="1"/>
        <end position="283"/>
    </location>
</feature>
<feature type="domain" description="Death" evidence="2">
    <location>
        <begin position="27"/>
        <end position="105"/>
    </location>
</feature>
<feature type="domain" description="TIR" evidence="3">
    <location>
        <begin position="147"/>
        <end position="281"/>
    </location>
</feature>
<feature type="region of interest" description="Intermediate domain" evidence="1">
    <location>
        <begin position="106"/>
        <end position="143"/>
    </location>
</feature>
<feature type="region of interest" description="Disordered" evidence="4">
    <location>
        <begin position="120"/>
        <end position="143"/>
    </location>
</feature>
<feature type="compositionally biased region" description="Basic and acidic residues" evidence="4">
    <location>
        <begin position="120"/>
        <end position="140"/>
    </location>
</feature>
<keyword id="KW-0963">Cytoplasm</keyword>
<keyword id="KW-0391">Immunity</keyword>
<keyword id="KW-0395">Inflammatory response</keyword>
<keyword id="KW-0399">Innate immunity</keyword>
<keyword id="KW-1185">Reference proteome</keyword>
<sequence>MACGSSLGSVDMNSIPLVALNYNVRHRLSLYLNPNAVVAAGWTQLAEEMGYDYLEIKNFERFPDCTMKLLEDWEKKCFRATVGGLLEMLKKMERNDILTDLGPLIEADCMKHLEKKNAPLPLQDDKVDSSEQYRITKSDDPSGSLPETFDAFICYCAQDISFVQEMISRLEQTDYKLKLCVFDRDVLPGTCLWSITSELIEHRCRKMVVIISDDYLDSSECDFQTKFALSLGPGAREKRLIPVKYKPMKRPFPSILRFITLCDYTNPCTKGWFWERLAKALSR</sequence>
<name>MYD88_XENTR</name>
<proteinExistence type="evidence at transcript level"/>
<gene>
    <name type="primary">myd88</name>
    <name type="ORF">TNeu124j11.1</name>
</gene>
<evidence type="ECO:0000250" key="1"/>
<evidence type="ECO:0000255" key="2">
    <source>
        <dbReference type="PROSITE-ProRule" id="PRU00064"/>
    </source>
</evidence>
<evidence type="ECO:0000255" key="3">
    <source>
        <dbReference type="PROSITE-ProRule" id="PRU00204"/>
    </source>
</evidence>
<evidence type="ECO:0000256" key="4">
    <source>
        <dbReference type="SAM" id="MobiDB-lite"/>
    </source>
</evidence>
<dbReference type="EMBL" id="CR855486">
    <property type="protein sequence ID" value="CAJ83053.1"/>
    <property type="molecule type" value="mRNA"/>
</dbReference>
<dbReference type="RefSeq" id="NP_001016837.1">
    <property type="nucleotide sequence ID" value="NM_001016837.2"/>
</dbReference>
<dbReference type="SMR" id="Q28DJ2"/>
<dbReference type="FunCoup" id="Q28DJ2">
    <property type="interactions" value="1481"/>
</dbReference>
<dbReference type="STRING" id="8364.ENSXETP00000045114"/>
<dbReference type="PaxDb" id="8364-ENSXETP00000039929"/>
<dbReference type="GeneID" id="549591"/>
<dbReference type="KEGG" id="xtr:549591"/>
<dbReference type="AGR" id="Xenbase:XB-GENE-486650"/>
<dbReference type="CTD" id="4615"/>
<dbReference type="Xenbase" id="XB-GENE-486650">
    <property type="gene designation" value="myd88"/>
</dbReference>
<dbReference type="eggNOG" id="ENOG502QWKI">
    <property type="taxonomic scope" value="Eukaryota"/>
</dbReference>
<dbReference type="InParanoid" id="Q28DJ2"/>
<dbReference type="OMA" id="SNECDFQ"/>
<dbReference type="OrthoDB" id="10037120at2759"/>
<dbReference type="Reactome" id="R-XTR-209543">
    <property type="pathway name" value="p75NTR recruits signalling complexes"/>
</dbReference>
<dbReference type="Reactome" id="R-XTR-3134963">
    <property type="pathway name" value="DEx/H-box helicases activate type I IFN and inflammatory cytokines production"/>
</dbReference>
<dbReference type="Reactome" id="R-XTR-9020702">
    <property type="pathway name" value="Interleukin-1 signaling"/>
</dbReference>
<dbReference type="Proteomes" id="UP000008143">
    <property type="component" value="Chromosome 6"/>
</dbReference>
<dbReference type="GO" id="GO:0005737">
    <property type="term" value="C:cytoplasm"/>
    <property type="evidence" value="ECO:0007669"/>
    <property type="project" value="UniProtKB-SubCell"/>
</dbReference>
<dbReference type="GO" id="GO:0070976">
    <property type="term" value="F:TIR domain binding"/>
    <property type="evidence" value="ECO:0007669"/>
    <property type="project" value="InterPro"/>
</dbReference>
<dbReference type="GO" id="GO:0006954">
    <property type="term" value="P:inflammatory response"/>
    <property type="evidence" value="ECO:0007669"/>
    <property type="project" value="UniProtKB-KW"/>
</dbReference>
<dbReference type="GO" id="GO:0045087">
    <property type="term" value="P:innate immune response"/>
    <property type="evidence" value="ECO:0007669"/>
    <property type="project" value="UniProtKB-KW"/>
</dbReference>
<dbReference type="GO" id="GO:0002755">
    <property type="term" value="P:MyD88-dependent toll-like receptor signaling pathway"/>
    <property type="evidence" value="ECO:0007669"/>
    <property type="project" value="InterPro"/>
</dbReference>
<dbReference type="GO" id="GO:0043123">
    <property type="term" value="P:positive regulation of canonical NF-kappaB signal transduction"/>
    <property type="evidence" value="ECO:0007669"/>
    <property type="project" value="InterPro"/>
</dbReference>
<dbReference type="CDD" id="cd08312">
    <property type="entry name" value="Death_MyD88"/>
    <property type="match status" value="1"/>
</dbReference>
<dbReference type="FunFam" id="1.10.533.10:FF:000029">
    <property type="entry name" value="Myeloid differentiation primary response protein MyD88"/>
    <property type="match status" value="1"/>
</dbReference>
<dbReference type="FunFam" id="3.40.50.10140:FF:000005">
    <property type="entry name" value="Myeloid differentiation primary response protein MyD88"/>
    <property type="match status" value="1"/>
</dbReference>
<dbReference type="Gene3D" id="1.10.533.10">
    <property type="entry name" value="Death Domain, Fas"/>
    <property type="match status" value="1"/>
</dbReference>
<dbReference type="Gene3D" id="3.40.50.10140">
    <property type="entry name" value="Toll/interleukin-1 receptor homology (TIR) domain"/>
    <property type="match status" value="1"/>
</dbReference>
<dbReference type="InterPro" id="IPR011029">
    <property type="entry name" value="DEATH-like_dom_sf"/>
</dbReference>
<dbReference type="InterPro" id="IPR000488">
    <property type="entry name" value="Death_dom"/>
</dbReference>
<dbReference type="InterPro" id="IPR034249">
    <property type="entry name" value="MyD88_Death"/>
</dbReference>
<dbReference type="InterPro" id="IPR017281">
    <property type="entry name" value="Myelin_different_resp_MyD88"/>
</dbReference>
<dbReference type="InterPro" id="IPR000157">
    <property type="entry name" value="TIR_dom"/>
</dbReference>
<dbReference type="InterPro" id="IPR035897">
    <property type="entry name" value="Toll_tir_struct_dom_sf"/>
</dbReference>
<dbReference type="PANTHER" id="PTHR15079">
    <property type="entry name" value="MYD88"/>
    <property type="match status" value="1"/>
</dbReference>
<dbReference type="PANTHER" id="PTHR15079:SF3">
    <property type="entry name" value="MYELOID DIFFERENTIATION PRIMARY RESPONSE PROTEIN MYD88"/>
    <property type="match status" value="1"/>
</dbReference>
<dbReference type="Pfam" id="PF00531">
    <property type="entry name" value="Death"/>
    <property type="match status" value="1"/>
</dbReference>
<dbReference type="Pfam" id="PF13676">
    <property type="entry name" value="TIR_2"/>
    <property type="match status" value="1"/>
</dbReference>
<dbReference type="PIRSF" id="PIRSF037756">
    <property type="entry name" value="MyD88"/>
    <property type="match status" value="1"/>
</dbReference>
<dbReference type="SMART" id="SM00005">
    <property type="entry name" value="DEATH"/>
    <property type="match status" value="1"/>
</dbReference>
<dbReference type="SMART" id="SM00255">
    <property type="entry name" value="TIR"/>
    <property type="match status" value="1"/>
</dbReference>
<dbReference type="SUPFAM" id="SSF47986">
    <property type="entry name" value="DEATH domain"/>
    <property type="match status" value="1"/>
</dbReference>
<dbReference type="SUPFAM" id="SSF52200">
    <property type="entry name" value="Toll/Interleukin receptor TIR domain"/>
    <property type="match status" value="1"/>
</dbReference>
<dbReference type="PROSITE" id="PS50017">
    <property type="entry name" value="DEATH_DOMAIN"/>
    <property type="match status" value="1"/>
</dbReference>
<dbReference type="PROSITE" id="PS50104">
    <property type="entry name" value="TIR"/>
    <property type="match status" value="1"/>
</dbReference>
<reference key="1">
    <citation type="submission" date="2006-10" db="EMBL/GenBank/DDBJ databases">
        <authorList>
            <consortium name="Sanger Xenopus tropicalis EST/cDNA project"/>
        </authorList>
    </citation>
    <scope>NUCLEOTIDE SEQUENCE [LARGE SCALE MRNA]</scope>
    <source>
        <tissue>Neurula</tissue>
    </source>
</reference>
<protein>
    <recommendedName>
        <fullName>Myeloid differentiation primary response protein MyD88</fullName>
    </recommendedName>
</protein>